<reference key="1">
    <citation type="journal article" date="2009" name="PLoS Genet.">
        <title>Organised genome dynamics in the Escherichia coli species results in highly diverse adaptive paths.</title>
        <authorList>
            <person name="Touchon M."/>
            <person name="Hoede C."/>
            <person name="Tenaillon O."/>
            <person name="Barbe V."/>
            <person name="Baeriswyl S."/>
            <person name="Bidet P."/>
            <person name="Bingen E."/>
            <person name="Bonacorsi S."/>
            <person name="Bouchier C."/>
            <person name="Bouvet O."/>
            <person name="Calteau A."/>
            <person name="Chiapello H."/>
            <person name="Clermont O."/>
            <person name="Cruveiller S."/>
            <person name="Danchin A."/>
            <person name="Diard M."/>
            <person name="Dossat C."/>
            <person name="Karoui M.E."/>
            <person name="Frapy E."/>
            <person name="Garry L."/>
            <person name="Ghigo J.M."/>
            <person name="Gilles A.M."/>
            <person name="Johnson J."/>
            <person name="Le Bouguenec C."/>
            <person name="Lescat M."/>
            <person name="Mangenot S."/>
            <person name="Martinez-Jehanne V."/>
            <person name="Matic I."/>
            <person name="Nassif X."/>
            <person name="Oztas S."/>
            <person name="Petit M.A."/>
            <person name="Pichon C."/>
            <person name="Rouy Z."/>
            <person name="Ruf C.S."/>
            <person name="Schneider D."/>
            <person name="Tourret J."/>
            <person name="Vacherie B."/>
            <person name="Vallenet D."/>
            <person name="Medigue C."/>
            <person name="Rocha E.P.C."/>
            <person name="Denamur E."/>
        </authorList>
    </citation>
    <scope>NUCLEOTIDE SEQUENCE [LARGE SCALE GENOMIC DNA]</scope>
    <source>
        <strain>UMN026 / ExPEC</strain>
    </source>
</reference>
<dbReference type="EC" id="3.5.1.-" evidence="1"/>
<dbReference type="EMBL" id="CU928163">
    <property type="protein sequence ID" value="CAR12401.1"/>
    <property type="molecule type" value="Genomic_DNA"/>
</dbReference>
<dbReference type="RefSeq" id="YP_002411945.2">
    <property type="nucleotide sequence ID" value="NC_011751.1"/>
</dbReference>
<dbReference type="SMR" id="B7N3G5"/>
<dbReference type="STRING" id="585056.ECUMN_1192"/>
<dbReference type="ESTHER" id="ecoli-rutD">
    <property type="family name" value="RutD"/>
</dbReference>
<dbReference type="KEGG" id="eum:ECUMN_1192"/>
<dbReference type="PATRIC" id="fig|585056.7.peg.1389"/>
<dbReference type="HOGENOM" id="CLU_020336_50_1_6"/>
<dbReference type="Proteomes" id="UP000007097">
    <property type="component" value="Chromosome"/>
</dbReference>
<dbReference type="GO" id="GO:0016020">
    <property type="term" value="C:membrane"/>
    <property type="evidence" value="ECO:0007669"/>
    <property type="project" value="TreeGrafter"/>
</dbReference>
<dbReference type="GO" id="GO:0016811">
    <property type="term" value="F:hydrolase activity, acting on carbon-nitrogen (but not peptide) bonds, in linear amides"/>
    <property type="evidence" value="ECO:0007669"/>
    <property type="project" value="InterPro"/>
</dbReference>
<dbReference type="GO" id="GO:0019740">
    <property type="term" value="P:nitrogen utilization"/>
    <property type="evidence" value="ECO:0007669"/>
    <property type="project" value="UniProtKB-UniRule"/>
</dbReference>
<dbReference type="GO" id="GO:0006212">
    <property type="term" value="P:uracil catabolic process"/>
    <property type="evidence" value="ECO:0007669"/>
    <property type="project" value="UniProtKB-UniRule"/>
</dbReference>
<dbReference type="FunFam" id="3.40.50.1820:FF:000052">
    <property type="entry name" value="Putative aminoacrylate hydrolase RutD"/>
    <property type="match status" value="1"/>
</dbReference>
<dbReference type="Gene3D" id="3.40.50.1820">
    <property type="entry name" value="alpha/beta hydrolase"/>
    <property type="match status" value="1"/>
</dbReference>
<dbReference type="HAMAP" id="MF_00832">
    <property type="entry name" value="RutD"/>
    <property type="match status" value="1"/>
</dbReference>
<dbReference type="InterPro" id="IPR000073">
    <property type="entry name" value="AB_hydrolase_1"/>
</dbReference>
<dbReference type="InterPro" id="IPR029058">
    <property type="entry name" value="AB_hydrolase_fold"/>
</dbReference>
<dbReference type="InterPro" id="IPR050266">
    <property type="entry name" value="AB_hydrolase_sf"/>
</dbReference>
<dbReference type="InterPro" id="IPR019913">
    <property type="entry name" value="Pyrimidine_utilisation_RutD"/>
</dbReference>
<dbReference type="NCBIfam" id="TIGR03611">
    <property type="entry name" value="RutD"/>
    <property type="match status" value="1"/>
</dbReference>
<dbReference type="PANTHER" id="PTHR43798:SF27">
    <property type="entry name" value="HYDROLASE ALPHA_BETA HYDROLASE FOLD FAMILY"/>
    <property type="match status" value="1"/>
</dbReference>
<dbReference type="PANTHER" id="PTHR43798">
    <property type="entry name" value="MONOACYLGLYCEROL LIPASE"/>
    <property type="match status" value="1"/>
</dbReference>
<dbReference type="Pfam" id="PF00561">
    <property type="entry name" value="Abhydrolase_1"/>
    <property type="match status" value="1"/>
</dbReference>
<dbReference type="PRINTS" id="PR00111">
    <property type="entry name" value="ABHYDROLASE"/>
</dbReference>
<dbReference type="SUPFAM" id="SSF53474">
    <property type="entry name" value="alpha/beta-Hydrolases"/>
    <property type="match status" value="1"/>
</dbReference>
<protein>
    <recommendedName>
        <fullName evidence="1">Putative carbamate hydrolase RutD</fullName>
        <ecNumber evidence="1">3.5.1.-</ecNumber>
    </recommendedName>
    <alternativeName>
        <fullName evidence="1">Aminohydrolase</fullName>
    </alternativeName>
</protein>
<keyword id="KW-0378">Hydrolase</keyword>
<evidence type="ECO:0000255" key="1">
    <source>
        <dbReference type="HAMAP-Rule" id="MF_00832"/>
    </source>
</evidence>
<organism>
    <name type="scientific">Escherichia coli O17:K52:H18 (strain UMN026 / ExPEC)</name>
    <dbReference type="NCBI Taxonomy" id="585056"/>
    <lineage>
        <taxon>Bacteria</taxon>
        <taxon>Pseudomonadati</taxon>
        <taxon>Pseudomonadota</taxon>
        <taxon>Gammaproteobacteria</taxon>
        <taxon>Enterobacterales</taxon>
        <taxon>Enterobacteriaceae</taxon>
        <taxon>Escherichia</taxon>
    </lineage>
</organism>
<sequence length="279" mass="30364">MRISPSEAAMKLSLSPPPYADAPVVVLISGLGGSGSYWLPQLAVLEQEYQVVCYDQRGTGNNPDTLAEDYSIAQMAAELHQALVAAGIKRYAVVGHALGALVGMQLALDYPASVTMLVSVNGWLRINAHTRRCFQVREQLLHSGGAQAWVEAQPLFLYPADWMAARAPRLEAEDALALAHFQGKNNLLRRLNALKRADFSHHADRIRCPVQIICASDDLLVPSACSSELHAALPDSQKMVMRYGGHACNVTHPETFNALLLNGLASLLHHREAACKELL</sequence>
<feature type="chain" id="PRO_0000402954" description="Putative carbamate hydrolase RutD">
    <location>
        <begin position="1"/>
        <end position="279"/>
    </location>
</feature>
<feature type="domain" description="AB hydrolase-1" evidence="1">
    <location>
        <begin position="23"/>
        <end position="126"/>
    </location>
</feature>
<accession>B7N3G5</accession>
<gene>
    <name evidence="1" type="primary">rutD</name>
    <name type="ordered locus">ECUMN_1192</name>
</gene>
<comment type="function">
    <text evidence="1">Involved in pyrimidine catabolism. May facilitate the hydrolysis of carbamate, a reaction that can also occur spontaneously.</text>
</comment>
<comment type="catalytic activity">
    <reaction evidence="1">
        <text>carbamate + 2 H(+) = NH4(+) + CO2</text>
        <dbReference type="Rhea" id="RHEA:15649"/>
        <dbReference type="ChEBI" id="CHEBI:13941"/>
        <dbReference type="ChEBI" id="CHEBI:15378"/>
        <dbReference type="ChEBI" id="CHEBI:16526"/>
        <dbReference type="ChEBI" id="CHEBI:28938"/>
    </reaction>
</comment>
<comment type="similarity">
    <text evidence="1">Belongs to the AB hydrolase superfamily. Hydrolase RutD family.</text>
</comment>
<name>RUTD_ECOLU</name>
<proteinExistence type="inferred from homology"/>